<feature type="chain" id="PRO_1000060526" description="Chaperone protein HtpG">
    <location>
        <begin position="1"/>
        <end position="624"/>
    </location>
</feature>
<feature type="region of interest" description="A; substrate-binding" evidence="1">
    <location>
        <begin position="1"/>
        <end position="336"/>
    </location>
</feature>
<feature type="region of interest" description="B" evidence="1">
    <location>
        <begin position="337"/>
        <end position="552"/>
    </location>
</feature>
<feature type="region of interest" description="C" evidence="1">
    <location>
        <begin position="553"/>
        <end position="624"/>
    </location>
</feature>
<organism>
    <name type="scientific">Escherichia coli O9:H4 (strain HS)</name>
    <dbReference type="NCBI Taxonomy" id="331112"/>
    <lineage>
        <taxon>Bacteria</taxon>
        <taxon>Pseudomonadati</taxon>
        <taxon>Pseudomonadota</taxon>
        <taxon>Gammaproteobacteria</taxon>
        <taxon>Enterobacterales</taxon>
        <taxon>Enterobacteriaceae</taxon>
        <taxon>Escherichia</taxon>
    </lineage>
</organism>
<gene>
    <name evidence="1" type="primary">htpG</name>
    <name type="ordered locus">EcHS_A0550</name>
</gene>
<name>HTPG_ECOHS</name>
<accession>A7ZXD1</accession>
<comment type="function">
    <text evidence="1">Molecular chaperone. Has ATPase activity.</text>
</comment>
<comment type="subunit">
    <text evidence="1">Homodimer.</text>
</comment>
<comment type="subcellular location">
    <subcellularLocation>
        <location evidence="1">Cytoplasm</location>
    </subcellularLocation>
</comment>
<comment type="similarity">
    <text evidence="1">Belongs to the heat shock protein 90 family.</text>
</comment>
<keyword id="KW-0067">ATP-binding</keyword>
<keyword id="KW-0143">Chaperone</keyword>
<keyword id="KW-0963">Cytoplasm</keyword>
<keyword id="KW-0547">Nucleotide-binding</keyword>
<keyword id="KW-0346">Stress response</keyword>
<proteinExistence type="inferred from homology"/>
<protein>
    <recommendedName>
        <fullName evidence="1">Chaperone protein HtpG</fullName>
    </recommendedName>
    <alternativeName>
        <fullName evidence="1">Heat shock protein HtpG</fullName>
    </alternativeName>
    <alternativeName>
        <fullName evidence="1">High temperature protein G</fullName>
    </alternativeName>
</protein>
<evidence type="ECO:0000255" key="1">
    <source>
        <dbReference type="HAMAP-Rule" id="MF_00505"/>
    </source>
</evidence>
<sequence length="624" mass="71423">MKGQETRGFQSEVKQLLHLMIHSLYSNKEIFLRELISNASDAADKLRFRALSNPDLYEGDGELRVRVSFDKDKRTLTISDNGVGMTRDEVIDHLGTIAKSGTKSFLESLGSDQAKDSQLIGQFGVGFYSAFIVADKVTVRTRAAGEKPENGVFWESAGEGEYTVADITKEDRGTEITLHLREGEDEFLDDWRVRSIISKYSDHIALPVEIEKREEKDGETVISWEKINKAQALWTRNKSEITDEEYKEFYKHIAHDFNDPLTWSHNRVEGKQEYTSLLYIPSQAPWDMWNRDHKHGLKLYVQRVFIMDDAEQFMPNYLRFVRGLIDSSDLPLNVSREILQDSTVTRNLRNALTKRVLQMLEKLAKDDAEKYQTFWQQFGLVLKEGPAEDFANQEAIAKLLRFASTHTDSSAQTVSLEDYVSRMKEGQEKIYYITADSYAAAKSSPHLELLRKKGIEVLLLSDRIDEWMMNYLTEFDGKPFQSVSKVDESLEKLADEVDESAKEAEKALTPFIDRVKALLGERVKDVRLTHRLTDTPAIVSTDADEMSTQMAKLFAAAGQKVPEVKYIFELNPDHVLVKRAADTEDEAKFSEWVELLLDQALLAERGTLEDPNLFIRRMNQLLVS</sequence>
<dbReference type="EMBL" id="CP000802">
    <property type="protein sequence ID" value="ABV04935.1"/>
    <property type="molecule type" value="Genomic_DNA"/>
</dbReference>
<dbReference type="RefSeq" id="WP_000678201.1">
    <property type="nucleotide sequence ID" value="NC_009800.1"/>
</dbReference>
<dbReference type="SMR" id="A7ZXD1"/>
<dbReference type="GeneID" id="93776977"/>
<dbReference type="KEGG" id="ecx:EcHS_A0550"/>
<dbReference type="HOGENOM" id="CLU_006684_3_0_6"/>
<dbReference type="GO" id="GO:0005737">
    <property type="term" value="C:cytoplasm"/>
    <property type="evidence" value="ECO:0007669"/>
    <property type="project" value="UniProtKB-SubCell"/>
</dbReference>
<dbReference type="GO" id="GO:0005524">
    <property type="term" value="F:ATP binding"/>
    <property type="evidence" value="ECO:0007669"/>
    <property type="project" value="UniProtKB-UniRule"/>
</dbReference>
<dbReference type="GO" id="GO:0016887">
    <property type="term" value="F:ATP hydrolysis activity"/>
    <property type="evidence" value="ECO:0007669"/>
    <property type="project" value="InterPro"/>
</dbReference>
<dbReference type="GO" id="GO:0140662">
    <property type="term" value="F:ATP-dependent protein folding chaperone"/>
    <property type="evidence" value="ECO:0007669"/>
    <property type="project" value="InterPro"/>
</dbReference>
<dbReference type="GO" id="GO:0051082">
    <property type="term" value="F:unfolded protein binding"/>
    <property type="evidence" value="ECO:0007669"/>
    <property type="project" value="UniProtKB-UniRule"/>
</dbReference>
<dbReference type="CDD" id="cd16927">
    <property type="entry name" value="HATPase_Hsp90-like"/>
    <property type="match status" value="1"/>
</dbReference>
<dbReference type="FunFam" id="1.20.120.790:FF:000002">
    <property type="entry name" value="Molecular chaperone HtpG"/>
    <property type="match status" value="1"/>
</dbReference>
<dbReference type="FunFam" id="3.30.230.80:FF:000002">
    <property type="entry name" value="Molecular chaperone HtpG"/>
    <property type="match status" value="1"/>
</dbReference>
<dbReference type="FunFam" id="3.30.565.10:FF:000009">
    <property type="entry name" value="Molecular chaperone HtpG"/>
    <property type="match status" value="1"/>
</dbReference>
<dbReference type="FunFam" id="3.40.50.11260:FF:000002">
    <property type="entry name" value="Molecular chaperone HtpG"/>
    <property type="match status" value="1"/>
</dbReference>
<dbReference type="Gene3D" id="3.30.230.80">
    <property type="match status" value="1"/>
</dbReference>
<dbReference type="Gene3D" id="3.40.50.11260">
    <property type="match status" value="1"/>
</dbReference>
<dbReference type="Gene3D" id="1.20.120.790">
    <property type="entry name" value="Heat shock protein 90, C-terminal domain"/>
    <property type="match status" value="1"/>
</dbReference>
<dbReference type="Gene3D" id="3.30.565.10">
    <property type="entry name" value="Histidine kinase-like ATPase, C-terminal domain"/>
    <property type="match status" value="1"/>
</dbReference>
<dbReference type="HAMAP" id="MF_00505">
    <property type="entry name" value="HSP90"/>
    <property type="match status" value="1"/>
</dbReference>
<dbReference type="InterPro" id="IPR036890">
    <property type="entry name" value="HATPase_C_sf"/>
</dbReference>
<dbReference type="InterPro" id="IPR019805">
    <property type="entry name" value="Heat_shock_protein_90_CS"/>
</dbReference>
<dbReference type="InterPro" id="IPR037196">
    <property type="entry name" value="HSP90_C"/>
</dbReference>
<dbReference type="InterPro" id="IPR001404">
    <property type="entry name" value="Hsp90_fam"/>
</dbReference>
<dbReference type="InterPro" id="IPR020575">
    <property type="entry name" value="Hsp90_N"/>
</dbReference>
<dbReference type="InterPro" id="IPR020568">
    <property type="entry name" value="Ribosomal_Su5_D2-typ_SF"/>
</dbReference>
<dbReference type="NCBIfam" id="NF003555">
    <property type="entry name" value="PRK05218.1"/>
    <property type="match status" value="1"/>
</dbReference>
<dbReference type="PANTHER" id="PTHR11528">
    <property type="entry name" value="HEAT SHOCK PROTEIN 90 FAMILY MEMBER"/>
    <property type="match status" value="1"/>
</dbReference>
<dbReference type="Pfam" id="PF13589">
    <property type="entry name" value="HATPase_c_3"/>
    <property type="match status" value="1"/>
</dbReference>
<dbReference type="Pfam" id="PF00183">
    <property type="entry name" value="HSP90"/>
    <property type="match status" value="1"/>
</dbReference>
<dbReference type="PIRSF" id="PIRSF002583">
    <property type="entry name" value="Hsp90"/>
    <property type="match status" value="1"/>
</dbReference>
<dbReference type="PRINTS" id="PR00775">
    <property type="entry name" value="HEATSHOCK90"/>
</dbReference>
<dbReference type="SMART" id="SM00387">
    <property type="entry name" value="HATPase_c"/>
    <property type="match status" value="1"/>
</dbReference>
<dbReference type="SUPFAM" id="SSF55874">
    <property type="entry name" value="ATPase domain of HSP90 chaperone/DNA topoisomerase II/histidine kinase"/>
    <property type="match status" value="1"/>
</dbReference>
<dbReference type="SUPFAM" id="SSF110942">
    <property type="entry name" value="HSP90 C-terminal domain"/>
    <property type="match status" value="1"/>
</dbReference>
<dbReference type="SUPFAM" id="SSF54211">
    <property type="entry name" value="Ribosomal protein S5 domain 2-like"/>
    <property type="match status" value="1"/>
</dbReference>
<dbReference type="PROSITE" id="PS00298">
    <property type="entry name" value="HSP90"/>
    <property type="match status" value="1"/>
</dbReference>
<reference key="1">
    <citation type="journal article" date="2008" name="J. Bacteriol.">
        <title>The pangenome structure of Escherichia coli: comparative genomic analysis of E. coli commensal and pathogenic isolates.</title>
        <authorList>
            <person name="Rasko D.A."/>
            <person name="Rosovitz M.J."/>
            <person name="Myers G.S.A."/>
            <person name="Mongodin E.F."/>
            <person name="Fricke W.F."/>
            <person name="Gajer P."/>
            <person name="Crabtree J."/>
            <person name="Sebaihia M."/>
            <person name="Thomson N.R."/>
            <person name="Chaudhuri R."/>
            <person name="Henderson I.R."/>
            <person name="Sperandio V."/>
            <person name="Ravel J."/>
        </authorList>
    </citation>
    <scope>NUCLEOTIDE SEQUENCE [LARGE SCALE GENOMIC DNA]</scope>
    <source>
        <strain>HS</strain>
    </source>
</reference>